<feature type="chain" id="PRO_0000158418" description="Ribose-5-phosphate isomerase A">
    <location>
        <begin position="1"/>
        <end position="219"/>
    </location>
</feature>
<feature type="active site" description="Proton acceptor" evidence="1">
    <location>
        <position position="103"/>
    </location>
</feature>
<feature type="binding site" evidence="1">
    <location>
        <begin position="28"/>
        <end position="31"/>
    </location>
    <ligand>
        <name>substrate</name>
    </ligand>
</feature>
<feature type="binding site" evidence="1">
    <location>
        <begin position="81"/>
        <end position="84"/>
    </location>
    <ligand>
        <name>substrate</name>
    </ligand>
</feature>
<feature type="binding site" evidence="1">
    <location>
        <begin position="94"/>
        <end position="97"/>
    </location>
    <ligand>
        <name>substrate</name>
    </ligand>
</feature>
<feature type="binding site" evidence="1">
    <location>
        <position position="121"/>
    </location>
    <ligand>
        <name>substrate</name>
    </ligand>
</feature>
<gene>
    <name evidence="1" type="primary">rpiA</name>
    <name type="ordered locus">ECA3906</name>
</gene>
<reference key="1">
    <citation type="journal article" date="2004" name="Proc. Natl. Acad. Sci. U.S.A.">
        <title>Genome sequence of the enterobacterial phytopathogen Erwinia carotovora subsp. atroseptica and characterization of virulence factors.</title>
        <authorList>
            <person name="Bell K.S."/>
            <person name="Sebaihia M."/>
            <person name="Pritchard L."/>
            <person name="Holden M.T.G."/>
            <person name="Hyman L.J."/>
            <person name="Holeva M.C."/>
            <person name="Thomson N.R."/>
            <person name="Bentley S.D."/>
            <person name="Churcher L.J.C."/>
            <person name="Mungall K."/>
            <person name="Atkin R."/>
            <person name="Bason N."/>
            <person name="Brooks K."/>
            <person name="Chillingworth T."/>
            <person name="Clark K."/>
            <person name="Doggett J."/>
            <person name="Fraser A."/>
            <person name="Hance Z."/>
            <person name="Hauser H."/>
            <person name="Jagels K."/>
            <person name="Moule S."/>
            <person name="Norbertczak H."/>
            <person name="Ormond D."/>
            <person name="Price C."/>
            <person name="Quail M.A."/>
            <person name="Sanders M."/>
            <person name="Walker D."/>
            <person name="Whitehead S."/>
            <person name="Salmond G.P.C."/>
            <person name="Birch P.R.J."/>
            <person name="Parkhill J."/>
            <person name="Toth I.K."/>
        </authorList>
    </citation>
    <scope>NUCLEOTIDE SEQUENCE [LARGE SCALE GENOMIC DNA]</scope>
    <source>
        <strain>SCRI 1043 / ATCC BAA-672</strain>
    </source>
</reference>
<organism>
    <name type="scientific">Pectobacterium atrosepticum (strain SCRI 1043 / ATCC BAA-672)</name>
    <name type="common">Erwinia carotovora subsp. atroseptica</name>
    <dbReference type="NCBI Taxonomy" id="218491"/>
    <lineage>
        <taxon>Bacteria</taxon>
        <taxon>Pseudomonadati</taxon>
        <taxon>Pseudomonadota</taxon>
        <taxon>Gammaproteobacteria</taxon>
        <taxon>Enterobacterales</taxon>
        <taxon>Pectobacteriaceae</taxon>
        <taxon>Pectobacterium</taxon>
    </lineage>
</organism>
<protein>
    <recommendedName>
        <fullName evidence="1">Ribose-5-phosphate isomerase A</fullName>
        <ecNumber evidence="1">5.3.1.6</ecNumber>
    </recommendedName>
    <alternativeName>
        <fullName evidence="1">Phosphoriboisomerase A</fullName>
        <shortName evidence="1">PRI</shortName>
    </alternativeName>
</protein>
<name>RPIA_PECAS</name>
<evidence type="ECO:0000255" key="1">
    <source>
        <dbReference type="HAMAP-Rule" id="MF_00170"/>
    </source>
</evidence>
<comment type="function">
    <text evidence="1">Catalyzes the reversible conversion of ribose-5-phosphate to ribulose 5-phosphate.</text>
</comment>
<comment type="catalytic activity">
    <reaction evidence="1">
        <text>aldehydo-D-ribose 5-phosphate = D-ribulose 5-phosphate</text>
        <dbReference type="Rhea" id="RHEA:14657"/>
        <dbReference type="ChEBI" id="CHEBI:58121"/>
        <dbReference type="ChEBI" id="CHEBI:58273"/>
        <dbReference type="EC" id="5.3.1.6"/>
    </reaction>
</comment>
<comment type="pathway">
    <text evidence="1">Carbohydrate degradation; pentose phosphate pathway; D-ribose 5-phosphate from D-ribulose 5-phosphate (non-oxidative stage): step 1/1.</text>
</comment>
<comment type="subunit">
    <text evidence="1">Homodimer.</text>
</comment>
<comment type="similarity">
    <text evidence="1">Belongs to the ribose 5-phosphate isomerase family.</text>
</comment>
<sequence length="219" mass="23008">MTQDELKKAVGWAALDYVRPDTIVGVGTGSTAAHFIDALGSIKHQIKGAVSSSDASTEKLKSLGIPVFDANDVDSLDVYVDGADEINGHMQMIKGGGAALTREKIISALSRQFICIVDASKQVDVLGKFPLPVEVIPMARSYVARELVKLGGQPEYRQGVVTDNGNVILDVHNLNIMDAVAVENHINGIAGVVTVGLFANRGADVALVGTADGVKTVTK</sequence>
<accession>Q6D093</accession>
<keyword id="KW-0413">Isomerase</keyword>
<keyword id="KW-1185">Reference proteome</keyword>
<dbReference type="EC" id="5.3.1.6" evidence="1"/>
<dbReference type="EMBL" id="BX950851">
    <property type="protein sequence ID" value="CAG76804.1"/>
    <property type="molecule type" value="Genomic_DNA"/>
</dbReference>
<dbReference type="RefSeq" id="WP_011095403.1">
    <property type="nucleotide sequence ID" value="NC_004547.2"/>
</dbReference>
<dbReference type="SMR" id="Q6D093"/>
<dbReference type="STRING" id="218491.ECA3906"/>
<dbReference type="GeneID" id="57210522"/>
<dbReference type="KEGG" id="eca:ECA3906"/>
<dbReference type="PATRIC" id="fig|218491.5.peg.3968"/>
<dbReference type="eggNOG" id="COG0120">
    <property type="taxonomic scope" value="Bacteria"/>
</dbReference>
<dbReference type="HOGENOM" id="CLU_056590_1_1_6"/>
<dbReference type="OrthoDB" id="5870696at2"/>
<dbReference type="UniPathway" id="UPA00115">
    <property type="reaction ID" value="UER00412"/>
</dbReference>
<dbReference type="Proteomes" id="UP000007966">
    <property type="component" value="Chromosome"/>
</dbReference>
<dbReference type="GO" id="GO:0005829">
    <property type="term" value="C:cytosol"/>
    <property type="evidence" value="ECO:0007669"/>
    <property type="project" value="TreeGrafter"/>
</dbReference>
<dbReference type="GO" id="GO:0004751">
    <property type="term" value="F:ribose-5-phosphate isomerase activity"/>
    <property type="evidence" value="ECO:0007669"/>
    <property type="project" value="UniProtKB-UniRule"/>
</dbReference>
<dbReference type="GO" id="GO:0006014">
    <property type="term" value="P:D-ribose metabolic process"/>
    <property type="evidence" value="ECO:0007669"/>
    <property type="project" value="TreeGrafter"/>
</dbReference>
<dbReference type="GO" id="GO:0009052">
    <property type="term" value="P:pentose-phosphate shunt, non-oxidative branch"/>
    <property type="evidence" value="ECO:0007669"/>
    <property type="project" value="UniProtKB-UniRule"/>
</dbReference>
<dbReference type="CDD" id="cd01398">
    <property type="entry name" value="RPI_A"/>
    <property type="match status" value="1"/>
</dbReference>
<dbReference type="FunFam" id="3.30.70.260:FF:000004">
    <property type="entry name" value="Ribose-5-phosphate isomerase A"/>
    <property type="match status" value="1"/>
</dbReference>
<dbReference type="FunFam" id="3.40.50.1360:FF:000001">
    <property type="entry name" value="Ribose-5-phosphate isomerase A"/>
    <property type="match status" value="1"/>
</dbReference>
<dbReference type="Gene3D" id="3.30.70.260">
    <property type="match status" value="1"/>
</dbReference>
<dbReference type="Gene3D" id="3.40.50.1360">
    <property type="match status" value="1"/>
</dbReference>
<dbReference type="HAMAP" id="MF_00170">
    <property type="entry name" value="Rib_5P_isom_A"/>
    <property type="match status" value="1"/>
</dbReference>
<dbReference type="InterPro" id="IPR037171">
    <property type="entry name" value="NagB/RpiA_transferase-like"/>
</dbReference>
<dbReference type="InterPro" id="IPR020672">
    <property type="entry name" value="Ribose5P_isomerase_typA_subgr"/>
</dbReference>
<dbReference type="InterPro" id="IPR004788">
    <property type="entry name" value="Ribose5P_isomerase_type_A"/>
</dbReference>
<dbReference type="NCBIfam" id="NF001924">
    <property type="entry name" value="PRK00702.1"/>
    <property type="match status" value="1"/>
</dbReference>
<dbReference type="NCBIfam" id="TIGR00021">
    <property type="entry name" value="rpiA"/>
    <property type="match status" value="1"/>
</dbReference>
<dbReference type="PANTHER" id="PTHR11934">
    <property type="entry name" value="RIBOSE-5-PHOSPHATE ISOMERASE"/>
    <property type="match status" value="1"/>
</dbReference>
<dbReference type="PANTHER" id="PTHR11934:SF0">
    <property type="entry name" value="RIBOSE-5-PHOSPHATE ISOMERASE"/>
    <property type="match status" value="1"/>
</dbReference>
<dbReference type="Pfam" id="PF06026">
    <property type="entry name" value="Rib_5-P_isom_A"/>
    <property type="match status" value="1"/>
</dbReference>
<dbReference type="SUPFAM" id="SSF75445">
    <property type="entry name" value="D-ribose-5-phosphate isomerase (RpiA), lid domain"/>
    <property type="match status" value="1"/>
</dbReference>
<dbReference type="SUPFAM" id="SSF100950">
    <property type="entry name" value="NagB/RpiA/CoA transferase-like"/>
    <property type="match status" value="1"/>
</dbReference>
<proteinExistence type="inferred from homology"/>